<organism>
    <name type="scientific">Saccharomyces cerevisiae (strain ATCC 204508 / S288c)</name>
    <name type="common">Baker's yeast</name>
    <dbReference type="NCBI Taxonomy" id="559292"/>
    <lineage>
        <taxon>Eukaryota</taxon>
        <taxon>Fungi</taxon>
        <taxon>Dikarya</taxon>
        <taxon>Ascomycota</taxon>
        <taxon>Saccharomycotina</taxon>
        <taxon>Saccharomycetes</taxon>
        <taxon>Saccharomycetales</taxon>
        <taxon>Saccharomycetaceae</taxon>
        <taxon>Saccharomyces</taxon>
    </lineage>
</organism>
<dbReference type="EC" id="6.1.1.9"/>
<dbReference type="EMBL" id="J02719">
    <property type="protein sequence ID" value="AAA35207.1"/>
    <property type="molecule type" value="Genomic_DNA"/>
</dbReference>
<dbReference type="EMBL" id="Z72879">
    <property type="protein sequence ID" value="CAA97097.1"/>
    <property type="molecule type" value="Genomic_DNA"/>
</dbReference>
<dbReference type="EMBL" id="M18392">
    <property type="protein sequence ID" value="AAA35205.1"/>
    <property type="molecule type" value="Genomic_DNA"/>
</dbReference>
<dbReference type="EMBL" id="M18392">
    <property type="protein sequence ID" value="AAA35206.1"/>
    <property type="molecule type" value="Genomic_DNA"/>
</dbReference>
<dbReference type="EMBL" id="BK006941">
    <property type="protein sequence ID" value="DAA08187.1"/>
    <property type="molecule type" value="Genomic_DNA"/>
</dbReference>
<dbReference type="PIR" id="S64389">
    <property type="entry name" value="SYBYVT"/>
</dbReference>
<dbReference type="RefSeq" id="NP_011608.1">
    <molecule id="P07806-1"/>
    <property type="nucleotide sequence ID" value="NM_001181223.1"/>
</dbReference>
<dbReference type="SMR" id="P07806"/>
<dbReference type="BioGRID" id="33337">
    <property type="interactions" value="117"/>
</dbReference>
<dbReference type="DIP" id="DIP-6328N"/>
<dbReference type="FunCoup" id="P07806">
    <property type="interactions" value="1443"/>
</dbReference>
<dbReference type="IntAct" id="P07806">
    <property type="interactions" value="32"/>
</dbReference>
<dbReference type="MINT" id="P07806"/>
<dbReference type="STRING" id="4932.YGR094W"/>
<dbReference type="iPTMnet" id="P07806"/>
<dbReference type="PaxDb" id="4932-YGR094W"/>
<dbReference type="PeptideAtlas" id="P07806"/>
<dbReference type="EnsemblFungi" id="YGR094W_mRNA">
    <molecule id="P07806-1"/>
    <property type="protein sequence ID" value="YGR094W"/>
    <property type="gene ID" value="YGR094W"/>
</dbReference>
<dbReference type="GeneID" id="852986"/>
<dbReference type="KEGG" id="sce:YGR094W"/>
<dbReference type="AGR" id="SGD:S000003326"/>
<dbReference type="SGD" id="S000003326">
    <property type="gene designation" value="VAS1"/>
</dbReference>
<dbReference type="VEuPathDB" id="FungiDB:YGR094W"/>
<dbReference type="eggNOG" id="KOG0432">
    <property type="taxonomic scope" value="Eukaryota"/>
</dbReference>
<dbReference type="GeneTree" id="ENSGT00940000167981"/>
<dbReference type="HOGENOM" id="CLU_001493_0_1_1"/>
<dbReference type="InParanoid" id="P07806"/>
<dbReference type="OMA" id="LDTWMDS"/>
<dbReference type="OrthoDB" id="629407at2759"/>
<dbReference type="BioCyc" id="YEAST:G3O-30804-MONOMER"/>
<dbReference type="BioGRID-ORCS" id="852986">
    <property type="hits" value="7 hits in 10 CRISPR screens"/>
</dbReference>
<dbReference type="PRO" id="PR:P07806"/>
<dbReference type="Proteomes" id="UP000002311">
    <property type="component" value="Chromosome VII"/>
</dbReference>
<dbReference type="RNAct" id="P07806">
    <property type="molecule type" value="protein"/>
</dbReference>
<dbReference type="GO" id="GO:0005737">
    <property type="term" value="C:cytoplasm"/>
    <property type="evidence" value="ECO:0000315"/>
    <property type="project" value="SGD"/>
</dbReference>
<dbReference type="GO" id="GO:0005829">
    <property type="term" value="C:cytosol"/>
    <property type="evidence" value="ECO:0000318"/>
    <property type="project" value="GO_Central"/>
</dbReference>
<dbReference type="GO" id="GO:0005739">
    <property type="term" value="C:mitochondrion"/>
    <property type="evidence" value="ECO:0000315"/>
    <property type="project" value="SGD"/>
</dbReference>
<dbReference type="GO" id="GO:0002161">
    <property type="term" value="F:aminoacyl-tRNA deacylase activity"/>
    <property type="evidence" value="ECO:0007669"/>
    <property type="project" value="InterPro"/>
</dbReference>
<dbReference type="GO" id="GO:0005524">
    <property type="term" value="F:ATP binding"/>
    <property type="evidence" value="ECO:0007669"/>
    <property type="project" value="UniProtKB-KW"/>
</dbReference>
<dbReference type="GO" id="GO:1990825">
    <property type="term" value="F:sequence-specific mRNA binding"/>
    <property type="evidence" value="ECO:0000314"/>
    <property type="project" value="SGD"/>
</dbReference>
<dbReference type="GO" id="GO:0004832">
    <property type="term" value="F:valine-tRNA ligase activity"/>
    <property type="evidence" value="ECO:0000314"/>
    <property type="project" value="SGD"/>
</dbReference>
<dbReference type="GO" id="GO:0006438">
    <property type="term" value="P:valyl-tRNA aminoacylation"/>
    <property type="evidence" value="ECO:0000314"/>
    <property type="project" value="SGD"/>
</dbReference>
<dbReference type="CDD" id="cd07962">
    <property type="entry name" value="Anticodon_Ia_Val"/>
    <property type="match status" value="1"/>
</dbReference>
<dbReference type="CDD" id="cd00817">
    <property type="entry name" value="ValRS_core"/>
    <property type="match status" value="1"/>
</dbReference>
<dbReference type="FunFam" id="1.10.287.380:FF:000001">
    <property type="entry name" value="Valine--tRNA ligase"/>
    <property type="match status" value="1"/>
</dbReference>
<dbReference type="FunFam" id="1.10.730.10:FF:000009">
    <property type="entry name" value="Valine--tRNA ligase, mitochondrial"/>
    <property type="match status" value="1"/>
</dbReference>
<dbReference type="FunFam" id="3.40.50.620:FF:000020">
    <property type="entry name" value="Valine--tRNA ligase, mitochondrial"/>
    <property type="match status" value="1"/>
</dbReference>
<dbReference type="FunFam" id="3.40.50.620:FF:000078">
    <property type="entry name" value="Valine--tRNA ligase, mitochondrial"/>
    <property type="match status" value="1"/>
</dbReference>
<dbReference type="FunFam" id="3.90.740.10:FF:000005">
    <property type="entry name" value="Valine--tRNA ligase, mitochondrial"/>
    <property type="match status" value="1"/>
</dbReference>
<dbReference type="Gene3D" id="3.40.50.620">
    <property type="entry name" value="HUPs"/>
    <property type="match status" value="2"/>
</dbReference>
<dbReference type="Gene3D" id="1.10.730.10">
    <property type="entry name" value="Isoleucyl-tRNA Synthetase, Domain 1"/>
    <property type="match status" value="1"/>
</dbReference>
<dbReference type="Gene3D" id="1.10.287.380">
    <property type="entry name" value="Valyl-tRNA synthetase, C-terminal domain"/>
    <property type="match status" value="1"/>
</dbReference>
<dbReference type="Gene3D" id="3.90.740.10">
    <property type="entry name" value="Valyl/Leucyl/Isoleucyl-tRNA synthetase, editing domain"/>
    <property type="match status" value="1"/>
</dbReference>
<dbReference type="HAMAP" id="MF_02004">
    <property type="entry name" value="Val_tRNA_synth_type1"/>
    <property type="match status" value="1"/>
</dbReference>
<dbReference type="InterPro" id="IPR001412">
    <property type="entry name" value="aa-tRNA-synth_I_CS"/>
</dbReference>
<dbReference type="InterPro" id="IPR002300">
    <property type="entry name" value="aa-tRNA-synth_Ia"/>
</dbReference>
<dbReference type="InterPro" id="IPR033705">
    <property type="entry name" value="Anticodon_Ia_Val"/>
</dbReference>
<dbReference type="InterPro" id="IPR013155">
    <property type="entry name" value="M/V/L/I-tRNA-synth_anticd-bd"/>
</dbReference>
<dbReference type="InterPro" id="IPR014729">
    <property type="entry name" value="Rossmann-like_a/b/a_fold"/>
</dbReference>
<dbReference type="InterPro" id="IPR010978">
    <property type="entry name" value="tRNA-bd_arm"/>
</dbReference>
<dbReference type="InterPro" id="IPR009080">
    <property type="entry name" value="tRNAsynth_Ia_anticodon-bd"/>
</dbReference>
<dbReference type="InterPro" id="IPR037118">
    <property type="entry name" value="Val-tRNA_synth_C_sf"/>
</dbReference>
<dbReference type="InterPro" id="IPR009008">
    <property type="entry name" value="Val/Leu/Ile-tRNA-synth_edit"/>
</dbReference>
<dbReference type="InterPro" id="IPR002303">
    <property type="entry name" value="Valyl-tRNA_ligase"/>
</dbReference>
<dbReference type="NCBIfam" id="NF004349">
    <property type="entry name" value="PRK05729.1"/>
    <property type="match status" value="1"/>
</dbReference>
<dbReference type="NCBIfam" id="TIGR00422">
    <property type="entry name" value="valS"/>
    <property type="match status" value="1"/>
</dbReference>
<dbReference type="PANTHER" id="PTHR11946:SF109">
    <property type="entry name" value="VALINE--TRNA LIGASE"/>
    <property type="match status" value="1"/>
</dbReference>
<dbReference type="PANTHER" id="PTHR11946">
    <property type="entry name" value="VALYL-TRNA SYNTHETASES"/>
    <property type="match status" value="1"/>
</dbReference>
<dbReference type="Pfam" id="PF08264">
    <property type="entry name" value="Anticodon_1"/>
    <property type="match status" value="1"/>
</dbReference>
<dbReference type="Pfam" id="PF00133">
    <property type="entry name" value="tRNA-synt_1"/>
    <property type="match status" value="1"/>
</dbReference>
<dbReference type="PRINTS" id="PR00986">
    <property type="entry name" value="TRNASYNTHVAL"/>
</dbReference>
<dbReference type="SUPFAM" id="SSF47323">
    <property type="entry name" value="Anticodon-binding domain of a subclass of class I aminoacyl-tRNA synthetases"/>
    <property type="match status" value="1"/>
</dbReference>
<dbReference type="SUPFAM" id="SSF52374">
    <property type="entry name" value="Nucleotidylyl transferase"/>
    <property type="match status" value="1"/>
</dbReference>
<dbReference type="SUPFAM" id="SSF46589">
    <property type="entry name" value="tRNA-binding arm"/>
    <property type="match status" value="1"/>
</dbReference>
<dbReference type="SUPFAM" id="SSF50677">
    <property type="entry name" value="ValRS/IleRS/LeuRS editing domain"/>
    <property type="match status" value="1"/>
</dbReference>
<dbReference type="PROSITE" id="PS00178">
    <property type="entry name" value="AA_TRNA_LIGASE_I"/>
    <property type="match status" value="1"/>
</dbReference>
<protein>
    <recommendedName>
        <fullName>Valine--tRNA ligase, mitochondrial</fullName>
        <ecNumber>6.1.1.9</ecNumber>
    </recommendedName>
    <alternativeName>
        <fullName>Valyl-tRNA synthetase</fullName>
        <shortName>ValRS</shortName>
    </alternativeName>
</protein>
<reference key="1">
    <citation type="journal article" date="1987" name="J. Biol. Chem.">
        <title>Structure of the yeast valyl-tRNA synthetase gene (VASI) and the homology of its translated amino acid sequence with Escherichia coli isoleucyl-tRNA synthetase.</title>
        <authorList>
            <person name="Jordana X."/>
            <person name="Chatton B."/>
            <person name="Paz-Weisshaar M."/>
            <person name="Buhler J.-M."/>
            <person name="Cramer F."/>
            <person name="Ebel J.-P."/>
            <person name="Fasiolo F."/>
        </authorList>
    </citation>
    <scope>NUCLEOTIDE SEQUENCE [GENOMIC DNA]</scope>
</reference>
<reference key="2">
    <citation type="journal article" date="1997" name="Nature">
        <title>The nucleotide sequence of Saccharomyces cerevisiae chromosome VII.</title>
        <authorList>
            <person name="Tettelin H."/>
            <person name="Agostoni-Carbone M.L."/>
            <person name="Albermann K."/>
            <person name="Albers M."/>
            <person name="Arroyo J."/>
            <person name="Backes U."/>
            <person name="Barreiros T."/>
            <person name="Bertani I."/>
            <person name="Bjourson A.J."/>
            <person name="Brueckner M."/>
            <person name="Bruschi C.V."/>
            <person name="Carignani G."/>
            <person name="Castagnoli L."/>
            <person name="Cerdan E."/>
            <person name="Clemente M.L."/>
            <person name="Coblenz A."/>
            <person name="Coglievina M."/>
            <person name="Coissac E."/>
            <person name="Defoor E."/>
            <person name="Del Bino S."/>
            <person name="Delius H."/>
            <person name="Delneri D."/>
            <person name="de Wergifosse P."/>
            <person name="Dujon B."/>
            <person name="Durand P."/>
            <person name="Entian K.-D."/>
            <person name="Eraso P."/>
            <person name="Escribano V."/>
            <person name="Fabiani L."/>
            <person name="Fartmann B."/>
            <person name="Feroli F."/>
            <person name="Feuermann M."/>
            <person name="Frontali L."/>
            <person name="Garcia-Gonzalez M."/>
            <person name="Garcia-Saez M.I."/>
            <person name="Goffeau A."/>
            <person name="Guerreiro P."/>
            <person name="Hani J."/>
            <person name="Hansen M."/>
            <person name="Hebling U."/>
            <person name="Hernandez K."/>
            <person name="Heumann K."/>
            <person name="Hilger F."/>
            <person name="Hofmann B."/>
            <person name="Indge K.J."/>
            <person name="James C.M."/>
            <person name="Klima R."/>
            <person name="Koetter P."/>
            <person name="Kramer B."/>
            <person name="Kramer W."/>
            <person name="Lauquin G."/>
            <person name="Leuther H."/>
            <person name="Louis E.J."/>
            <person name="Maillier E."/>
            <person name="Marconi A."/>
            <person name="Martegani E."/>
            <person name="Mazon M.J."/>
            <person name="Mazzoni C."/>
            <person name="McReynolds A.D.K."/>
            <person name="Melchioretto P."/>
            <person name="Mewes H.-W."/>
            <person name="Minenkova O."/>
            <person name="Mueller-Auer S."/>
            <person name="Nawrocki A."/>
            <person name="Netter P."/>
            <person name="Neu R."/>
            <person name="Nombela C."/>
            <person name="Oliver S.G."/>
            <person name="Panzeri L."/>
            <person name="Paoluzi S."/>
            <person name="Plevani P."/>
            <person name="Portetelle D."/>
            <person name="Portillo F."/>
            <person name="Potier S."/>
            <person name="Purnelle B."/>
            <person name="Rieger M."/>
            <person name="Riles L."/>
            <person name="Rinaldi T."/>
            <person name="Robben J."/>
            <person name="Rodrigues-Pousada C."/>
            <person name="Rodriguez-Belmonte E."/>
            <person name="Rodriguez-Torres A.M."/>
            <person name="Rose M."/>
            <person name="Ruzzi M."/>
            <person name="Saliola M."/>
            <person name="Sanchez-Perez M."/>
            <person name="Schaefer B."/>
            <person name="Schaefer M."/>
            <person name="Scharfe M."/>
            <person name="Schmidheini T."/>
            <person name="Schreer A."/>
            <person name="Skala J."/>
            <person name="Souciet J.-L."/>
            <person name="Steensma H.Y."/>
            <person name="Talla E."/>
            <person name="Thierry A."/>
            <person name="Vandenbol M."/>
            <person name="van der Aart Q.J.M."/>
            <person name="Van Dyck L."/>
            <person name="Vanoni M."/>
            <person name="Verhasselt P."/>
            <person name="Voet M."/>
            <person name="Volckaert G."/>
            <person name="Wambutt R."/>
            <person name="Watson M.D."/>
            <person name="Weber N."/>
            <person name="Wedler E."/>
            <person name="Wedler H."/>
            <person name="Wipfli P."/>
            <person name="Wolf K."/>
            <person name="Wright L.F."/>
            <person name="Zaccaria P."/>
            <person name="Zimmermann M."/>
            <person name="Zollner A."/>
            <person name="Kleine K."/>
        </authorList>
    </citation>
    <scope>NUCLEOTIDE SEQUENCE [LARGE SCALE GENOMIC DNA]</scope>
    <source>
        <strain>ATCC 204508 / S288c</strain>
    </source>
</reference>
<reference key="3">
    <citation type="journal article" date="2014" name="G3 (Bethesda)">
        <title>The reference genome sequence of Saccharomyces cerevisiae: Then and now.</title>
        <authorList>
            <person name="Engel S.R."/>
            <person name="Dietrich F.S."/>
            <person name="Fisk D.G."/>
            <person name="Binkley G."/>
            <person name="Balakrishnan R."/>
            <person name="Costanzo M.C."/>
            <person name="Dwight S.S."/>
            <person name="Hitz B.C."/>
            <person name="Karra K."/>
            <person name="Nash R.S."/>
            <person name="Weng S."/>
            <person name="Wong E.D."/>
            <person name="Lloyd P."/>
            <person name="Skrzypek M.S."/>
            <person name="Miyasato S.R."/>
            <person name="Simison M."/>
            <person name="Cherry J.M."/>
        </authorList>
    </citation>
    <scope>GENOME REANNOTATION</scope>
    <source>
        <strain>ATCC 204508 / S288c</strain>
    </source>
</reference>
<reference key="4">
    <citation type="journal article" date="1988" name="J. Biol. Chem.">
        <title>The yeast VAS1 gene encodes both mitochondrial and cytoplasmic valyl-tRNA synthetases.</title>
        <authorList>
            <person name="Chatton B."/>
            <person name="Walter P."/>
            <person name="Ebel J.-P."/>
            <person name="Lacroute F."/>
            <person name="Fasiolo F."/>
        </authorList>
    </citation>
    <scope>NUCLEOTIDE SEQUENCE [GENOMIC DNA] OF 1-78</scope>
</reference>
<reference key="5">
    <citation type="journal article" date="2003" name="Nature">
        <title>Global analysis of protein expression in yeast.</title>
        <authorList>
            <person name="Ghaemmaghami S."/>
            <person name="Huh W.-K."/>
            <person name="Bower K."/>
            <person name="Howson R.W."/>
            <person name="Belle A."/>
            <person name="Dephoure N."/>
            <person name="O'Shea E.K."/>
            <person name="Weissman J.S."/>
        </authorList>
    </citation>
    <scope>LEVEL OF PROTEIN EXPRESSION [LARGE SCALE ANALYSIS]</scope>
</reference>
<reference key="6">
    <citation type="journal article" date="2008" name="Mol. Cell. Proteomics">
        <title>A multidimensional chromatography technology for in-depth phosphoproteome analysis.</title>
        <authorList>
            <person name="Albuquerque C.P."/>
            <person name="Smolka M.B."/>
            <person name="Payne S.H."/>
            <person name="Bafna V."/>
            <person name="Eng J."/>
            <person name="Zhou H."/>
        </authorList>
    </citation>
    <scope>PHOSPHORYLATION [LARGE SCALE ANALYSIS] AT SER-73; SER-294; SER-332; SER-707 AND THR-1003</scope>
    <scope>IDENTIFICATION BY MASS SPECTROMETRY [LARGE SCALE ANALYSIS]</scope>
</reference>
<sequence>MNKWLNTLSKTFTFRLLNCHYRRSLPLCQNFSLKKSLTHNQVRFFKMSDLDNLPPVDPKTGEVIINPLKEDGSPKTPKEIEKEKKKAEKLLKFAAKQAKKNAAATTGASQKKPKKKKEVEPIPEFIDKTVPGEKKILVSLDDPALKAYNPANVESSWYDWWIKTGVFEPEFTADGKVKPEGVFCIPAPPPNVTGALHIGHALTIAIQDSLIRYNRMKGKTVLFLPGFDHAGIATQSVVEKQIWAKDRKTRHDYGREAFVGKVWEWKEEYHSRIKNQIQKLGASYDWSREAFTLSPELTKSVEEAFVRLHDEGVIYRASRLVNWSVKLNTAISNLEVENKDVKSRTLLSVPGYDEKVEFGVLTSFAYPVIGSDEKLIIATTRPETIFGDTAVAVHPDDDRYKHLHGKFIQHPFLPRKIPIITDKEAVDMEFGTGAVKITPAHDQNDYNTGKRHNLEFINILTDDGLLNEECGPEWQGMKRFDARKKVIEQLKEKNLYVGQEDNEMTIPTCSRSGDIIEPLLKPQWWVSQSEMAKDAIKVVRDGQITITPKSSEAEYFHWLGNIQDWCISRQLWWGHRCPVYFINIEGEEHDRIDGDYWVAGRSMEEAEKKAAAKYPNSKFTLEQDEDVLDTWFSSGLWPFSTLGWPEKTKDMETFYPFSMLETGWDILFFWVTRMILLGLKLTGSVPFKEVFCHSLVRDAQGRKMSKSLGNVIDPLDVITGIKLDDLHAKLLQGNLDPREVEKAKIGQKESYPNGIPQCGTDAMRFALCAYTTGGRDINLDILRVEGYRKFCNKIYQATKFALMRLGDDYQPPATEGLSGNESLVEKWILHKLTETSKIVNEALDKRDFLTSTSSIYEFWYLICDVYIENSKYLIQEGSAIEKKSAKDTLYILLDNALKLIHPFMPFISEEMWQRLPKRSTEKAASIVKASYPVYVSEYDDVKSANAYDLVLNITKEARSLLSEYNILKNGKVFVESNHEEYFKTAEDQKDSIVSLIKAIDEVTVVRDASEIPEGCVLQSVNPEVNVHLLVKGHVDIDAEIAKVQKKLEKAKKSKNGIEQTINSKDYETKANTQAKEANKSKLDNTVAEIEGLEATIENLKRLKL</sequence>
<comment type="catalytic activity">
    <reaction>
        <text>tRNA(Val) + L-valine + ATP = L-valyl-tRNA(Val) + AMP + diphosphate</text>
        <dbReference type="Rhea" id="RHEA:10704"/>
        <dbReference type="Rhea" id="RHEA-COMP:9672"/>
        <dbReference type="Rhea" id="RHEA-COMP:9708"/>
        <dbReference type="ChEBI" id="CHEBI:30616"/>
        <dbReference type="ChEBI" id="CHEBI:33019"/>
        <dbReference type="ChEBI" id="CHEBI:57762"/>
        <dbReference type="ChEBI" id="CHEBI:78442"/>
        <dbReference type="ChEBI" id="CHEBI:78537"/>
        <dbReference type="ChEBI" id="CHEBI:456215"/>
        <dbReference type="EC" id="6.1.1.9"/>
    </reaction>
</comment>
<comment type="subcellular location">
    <molecule>Isoform Cytoplasmic</molecule>
    <subcellularLocation>
        <location>Cytoplasm</location>
    </subcellularLocation>
</comment>
<comment type="subcellular location">
    <molecule>Isoform Mitochondrial</molecule>
    <subcellularLocation>
        <location>Mitochondrion</location>
    </subcellularLocation>
</comment>
<comment type="alternative products">
    <event type="alternative initiation"/>
    <isoform>
        <id>P07806-1</id>
        <name>Mitochondrial</name>
        <sequence type="displayed"/>
    </isoform>
    <isoform>
        <id>P07806-2</id>
        <name>Cytoplasmic</name>
        <sequence type="described" ref="VSP_018910"/>
    </isoform>
</comment>
<comment type="miscellaneous">
    <text evidence="3">Present with 358 molecules/cell in log phase SD medium.</text>
</comment>
<comment type="miscellaneous">
    <molecule>Isoform Cytoplasmic</molecule>
    <text evidence="4">Produced by alternative initiation at Met-47 of isoform Mitochondrial.</text>
</comment>
<comment type="similarity">
    <text evidence="4">Belongs to the class-I aminoacyl-tRNA synthetase family.</text>
</comment>
<accession>P07806</accession>
<accession>D6VUM6</accession>
<name>SYV_YEAST</name>
<feature type="transit peptide" description="Mitochondrion">
    <location>
        <begin position="1"/>
        <end position="47"/>
    </location>
</feature>
<feature type="chain" id="PRO_0000035839" description="Valine--tRNA ligase, mitochondrial">
    <location>
        <begin position="48"/>
        <end position="1104"/>
    </location>
</feature>
<feature type="region of interest" description="Disordered" evidence="2">
    <location>
        <begin position="99"/>
        <end position="119"/>
    </location>
</feature>
<feature type="short sequence motif" description="'HIGH' region">
    <location>
        <begin position="190"/>
        <end position="200"/>
    </location>
</feature>
<feature type="short sequence motif" description="'KMSKS' region">
    <location>
        <begin position="703"/>
        <end position="707"/>
    </location>
</feature>
<feature type="binding site" evidence="1">
    <location>
        <position position="706"/>
    </location>
    <ligand>
        <name>ATP</name>
        <dbReference type="ChEBI" id="CHEBI:30616"/>
    </ligand>
</feature>
<feature type="modified residue" description="Phosphoserine" evidence="5">
    <location>
        <position position="73"/>
    </location>
</feature>
<feature type="modified residue" description="Phosphoserine" evidence="5">
    <location>
        <position position="294"/>
    </location>
</feature>
<feature type="modified residue" description="Phosphoserine" evidence="5">
    <location>
        <position position="332"/>
    </location>
</feature>
<feature type="modified residue" description="Phosphoserine" evidence="5">
    <location>
        <position position="707"/>
    </location>
</feature>
<feature type="modified residue" description="Phosphothreonine" evidence="5">
    <location>
        <position position="1003"/>
    </location>
</feature>
<feature type="splice variant" id="VSP_018910" description="In isoform Cytoplasmic." evidence="4">
    <location>
        <begin position="1"/>
        <end position="46"/>
    </location>
</feature>
<feature type="sequence conflict" description="In Ref. 1; AAA35207." evidence="4" ref="1">
    <original>A</original>
    <variation>G</variation>
    <location>
        <position position="147"/>
    </location>
</feature>
<feature type="sequence conflict" description="In Ref. 1; AAA35207." evidence="4" ref="1">
    <original>R</original>
    <variation>K</variation>
    <location>
        <position position="540"/>
    </location>
</feature>
<proteinExistence type="evidence at protein level"/>
<gene>
    <name type="primary">VAS1</name>
    <name type="ordered locus">YGR094W</name>
</gene>
<evidence type="ECO:0000250" key="1"/>
<evidence type="ECO:0000256" key="2">
    <source>
        <dbReference type="SAM" id="MobiDB-lite"/>
    </source>
</evidence>
<evidence type="ECO:0000269" key="3">
    <source>
    </source>
</evidence>
<evidence type="ECO:0000305" key="4"/>
<evidence type="ECO:0007744" key="5">
    <source>
    </source>
</evidence>
<keyword id="KW-0024">Alternative initiation</keyword>
<keyword id="KW-0030">Aminoacyl-tRNA synthetase</keyword>
<keyword id="KW-0067">ATP-binding</keyword>
<keyword id="KW-0963">Cytoplasm</keyword>
<keyword id="KW-0436">Ligase</keyword>
<keyword id="KW-0496">Mitochondrion</keyword>
<keyword id="KW-0547">Nucleotide-binding</keyword>
<keyword id="KW-0597">Phosphoprotein</keyword>
<keyword id="KW-0648">Protein biosynthesis</keyword>
<keyword id="KW-1185">Reference proteome</keyword>
<keyword id="KW-0809">Transit peptide</keyword>